<gene>
    <name type="primary">AIM41</name>
    <name type="ORF">CLUG_01095</name>
</gene>
<sequence>MFASLRRFQATPAYGALLSSLKVDLKKAMIAKNNMEKTTIRSILSTIKNNEIDGGAQTEFELSKVLGKMVKQRVDSAREFQQQKRDDLAEIESKESEIIKKYVESLPVASDEEIKEKLTHFLNEIKANDANTHVGAIFKQINDDLASSWGAAPSVIKSMVPSLYKDIFKK</sequence>
<dbReference type="EMBL" id="CH408076">
    <property type="protein sequence ID" value="EEQ36972.1"/>
    <property type="molecule type" value="Genomic_DNA"/>
</dbReference>
<dbReference type="RefSeq" id="XP_002619936.1">
    <property type="nucleotide sequence ID" value="XM_002619890.1"/>
</dbReference>
<dbReference type="SMR" id="C4XYS2"/>
<dbReference type="FunCoup" id="C4XYS2">
    <property type="interactions" value="109"/>
</dbReference>
<dbReference type="STRING" id="306902.C4XYS2"/>
<dbReference type="GeneID" id="8499512"/>
<dbReference type="KEGG" id="clu:CLUG_01095"/>
<dbReference type="VEuPathDB" id="FungiDB:CLUG_01095"/>
<dbReference type="HOGENOM" id="CLU_123460_0_0_1"/>
<dbReference type="InParanoid" id="C4XYS2"/>
<dbReference type="OMA" id="AMGAVMK"/>
<dbReference type="OrthoDB" id="56127at4891"/>
<dbReference type="Proteomes" id="UP000007703">
    <property type="component" value="Unassembled WGS sequence"/>
</dbReference>
<dbReference type="GO" id="GO:0005739">
    <property type="term" value="C:mitochondrion"/>
    <property type="evidence" value="ECO:0007669"/>
    <property type="project" value="UniProtKB-SubCell"/>
</dbReference>
<dbReference type="GO" id="GO:0016884">
    <property type="term" value="F:carbon-nitrogen ligase activity, with glutamine as amido-N-donor"/>
    <property type="evidence" value="ECO:0007669"/>
    <property type="project" value="InterPro"/>
</dbReference>
<dbReference type="Gene3D" id="1.10.1510.10">
    <property type="entry name" value="Uncharacterised protein YqeY/AIM41 PF09424, N-terminal domain"/>
    <property type="match status" value="1"/>
</dbReference>
<dbReference type="InterPro" id="IPR003789">
    <property type="entry name" value="Asn/Gln_tRNA_amidoTrase-B-like"/>
</dbReference>
<dbReference type="InterPro" id="IPR019004">
    <property type="entry name" value="YqeY/Aim41"/>
</dbReference>
<dbReference type="InterPro" id="IPR042184">
    <property type="entry name" value="YqeY/Aim41_N"/>
</dbReference>
<dbReference type="PANTHER" id="PTHR28055">
    <property type="entry name" value="ALTERED INHERITANCE OF MITOCHONDRIA PROTEIN 41, MITOCHONDRIAL"/>
    <property type="match status" value="1"/>
</dbReference>
<dbReference type="PANTHER" id="PTHR28055:SF1">
    <property type="entry name" value="ALTERED INHERITANCE OF MITOCHONDRIA PROTEIN 41, MITOCHONDRIAL"/>
    <property type="match status" value="1"/>
</dbReference>
<dbReference type="Pfam" id="PF09424">
    <property type="entry name" value="YqeY"/>
    <property type="match status" value="1"/>
</dbReference>
<dbReference type="SUPFAM" id="SSF89095">
    <property type="entry name" value="GatB/YqeY motif"/>
    <property type="match status" value="1"/>
</dbReference>
<organism>
    <name type="scientific">Clavispora lusitaniae (strain ATCC 42720)</name>
    <name type="common">Yeast</name>
    <name type="synonym">Candida lusitaniae</name>
    <dbReference type="NCBI Taxonomy" id="306902"/>
    <lineage>
        <taxon>Eukaryota</taxon>
        <taxon>Fungi</taxon>
        <taxon>Dikarya</taxon>
        <taxon>Ascomycota</taxon>
        <taxon>Saccharomycotina</taxon>
        <taxon>Pichiomycetes</taxon>
        <taxon>Metschnikowiaceae</taxon>
        <taxon>Clavispora</taxon>
    </lineage>
</organism>
<comment type="subcellular location">
    <subcellularLocation>
        <location evidence="1">Mitochondrion</location>
    </subcellularLocation>
</comment>
<comment type="similarity">
    <text evidence="3">Belongs to the AIM41 family.</text>
</comment>
<protein>
    <recommendedName>
        <fullName>Altered inheritance of mitochondria protein 41, mitochondrial</fullName>
    </recommendedName>
</protein>
<feature type="transit peptide" description="Mitochondrion" evidence="2">
    <location>
        <begin position="1"/>
        <end status="unknown"/>
    </location>
</feature>
<feature type="chain" id="PRO_0000399864" description="Altered inheritance of mitochondria protein 41, mitochondrial">
    <location>
        <begin status="unknown"/>
        <end position="170"/>
    </location>
</feature>
<keyword id="KW-0496">Mitochondrion</keyword>
<keyword id="KW-1185">Reference proteome</keyword>
<keyword id="KW-0809">Transit peptide</keyword>
<evidence type="ECO:0000250" key="1"/>
<evidence type="ECO:0000255" key="2"/>
<evidence type="ECO:0000305" key="3"/>
<proteinExistence type="inferred from homology"/>
<accession>C4XYS2</accession>
<reference key="1">
    <citation type="journal article" date="2009" name="Nature">
        <title>Evolution of pathogenicity and sexual reproduction in eight Candida genomes.</title>
        <authorList>
            <person name="Butler G."/>
            <person name="Rasmussen M.D."/>
            <person name="Lin M.F."/>
            <person name="Santos M.A.S."/>
            <person name="Sakthikumar S."/>
            <person name="Munro C.A."/>
            <person name="Rheinbay E."/>
            <person name="Grabherr M."/>
            <person name="Forche A."/>
            <person name="Reedy J.L."/>
            <person name="Agrafioti I."/>
            <person name="Arnaud M.B."/>
            <person name="Bates S."/>
            <person name="Brown A.J.P."/>
            <person name="Brunke S."/>
            <person name="Costanzo M.C."/>
            <person name="Fitzpatrick D.A."/>
            <person name="de Groot P.W.J."/>
            <person name="Harris D."/>
            <person name="Hoyer L.L."/>
            <person name="Hube B."/>
            <person name="Klis F.M."/>
            <person name="Kodira C."/>
            <person name="Lennard N."/>
            <person name="Logue M.E."/>
            <person name="Martin R."/>
            <person name="Neiman A.M."/>
            <person name="Nikolaou E."/>
            <person name="Quail M.A."/>
            <person name="Quinn J."/>
            <person name="Santos M.C."/>
            <person name="Schmitzberger F.F."/>
            <person name="Sherlock G."/>
            <person name="Shah P."/>
            <person name="Silverstein K.A.T."/>
            <person name="Skrzypek M.S."/>
            <person name="Soll D."/>
            <person name="Staggs R."/>
            <person name="Stansfield I."/>
            <person name="Stumpf M.P.H."/>
            <person name="Sudbery P.E."/>
            <person name="Srikantha T."/>
            <person name="Zeng Q."/>
            <person name="Berman J."/>
            <person name="Berriman M."/>
            <person name="Heitman J."/>
            <person name="Gow N.A.R."/>
            <person name="Lorenz M.C."/>
            <person name="Birren B.W."/>
            <person name="Kellis M."/>
            <person name="Cuomo C.A."/>
        </authorList>
    </citation>
    <scope>NUCLEOTIDE SEQUENCE [LARGE SCALE GENOMIC DNA]</scope>
    <source>
        <strain>ATCC 42720</strain>
    </source>
</reference>
<name>AIM41_CLAL4</name>